<organism>
    <name type="scientific">Arabidopsis thaliana</name>
    <name type="common">Mouse-ear cress</name>
    <dbReference type="NCBI Taxonomy" id="3702"/>
    <lineage>
        <taxon>Eukaryota</taxon>
        <taxon>Viridiplantae</taxon>
        <taxon>Streptophyta</taxon>
        <taxon>Embryophyta</taxon>
        <taxon>Tracheophyta</taxon>
        <taxon>Spermatophyta</taxon>
        <taxon>Magnoliopsida</taxon>
        <taxon>eudicotyledons</taxon>
        <taxon>Gunneridae</taxon>
        <taxon>Pentapetalae</taxon>
        <taxon>rosids</taxon>
        <taxon>malvids</taxon>
        <taxon>Brassicales</taxon>
        <taxon>Brassicaceae</taxon>
        <taxon>Camelineae</taxon>
        <taxon>Arabidopsis</taxon>
    </lineage>
</organism>
<dbReference type="EMBL" id="AC002130">
    <property type="protein sequence ID" value="AAG00248.1"/>
    <property type="molecule type" value="Genomic_DNA"/>
</dbReference>
<dbReference type="EMBL" id="CP002684">
    <property type="protein sequence ID" value="AEE34636.1"/>
    <property type="molecule type" value="Genomic_DNA"/>
</dbReference>
<dbReference type="EMBL" id="CP002684">
    <property type="protein sequence ID" value="AEE34637.1"/>
    <property type="molecule type" value="Genomic_DNA"/>
</dbReference>
<dbReference type="EMBL" id="AY050911">
    <property type="protein sequence ID" value="AAK93588.1"/>
    <property type="molecule type" value="mRNA"/>
</dbReference>
<dbReference type="EMBL" id="AY091413">
    <property type="protein sequence ID" value="AAM14352.1"/>
    <property type="molecule type" value="mRNA"/>
</dbReference>
<dbReference type="EMBL" id="AY136297">
    <property type="protein sequence ID" value="AAM96963.1"/>
    <property type="molecule type" value="mRNA"/>
</dbReference>
<dbReference type="EMBL" id="BT000410">
    <property type="protein sequence ID" value="AAN15729.1"/>
    <property type="molecule type" value="mRNA"/>
</dbReference>
<dbReference type="EMBL" id="AY085233">
    <property type="protein sequence ID" value="AAM62466.1"/>
    <property type="molecule type" value="mRNA"/>
</dbReference>
<dbReference type="PIR" id="A96697">
    <property type="entry name" value="A96697"/>
</dbReference>
<dbReference type="RefSeq" id="NP_176904.1">
    <property type="nucleotide sequence ID" value="NM_105404.3"/>
</dbReference>
<dbReference type="RefSeq" id="NP_849856.1">
    <property type="nucleotide sequence ID" value="NM_179525.3"/>
</dbReference>
<dbReference type="BioGRID" id="28278">
    <property type="interactions" value="1"/>
</dbReference>
<dbReference type="FunCoup" id="Q9FYF7">
    <property type="interactions" value="30"/>
</dbReference>
<dbReference type="IntAct" id="Q9FYF7">
    <property type="interactions" value="1"/>
</dbReference>
<dbReference type="STRING" id="3702.Q9FYF7"/>
<dbReference type="iPTMnet" id="Q9FYF7"/>
<dbReference type="PaxDb" id="3702-AT1G67360.2"/>
<dbReference type="ProteomicsDB" id="242478"/>
<dbReference type="EnsemblPlants" id="AT1G67360.1">
    <property type="protein sequence ID" value="AT1G67360.1"/>
    <property type="gene ID" value="AT1G67360"/>
</dbReference>
<dbReference type="EnsemblPlants" id="AT1G67360.2">
    <property type="protein sequence ID" value="AT1G67360.2"/>
    <property type="gene ID" value="AT1G67360"/>
</dbReference>
<dbReference type="GeneID" id="843057"/>
<dbReference type="Gramene" id="AT1G67360.1">
    <property type="protein sequence ID" value="AT1G67360.1"/>
    <property type="gene ID" value="AT1G67360"/>
</dbReference>
<dbReference type="Gramene" id="AT1G67360.2">
    <property type="protein sequence ID" value="AT1G67360.2"/>
    <property type="gene ID" value="AT1G67360"/>
</dbReference>
<dbReference type="KEGG" id="ath:AT1G67360"/>
<dbReference type="Araport" id="AT1G67360"/>
<dbReference type="TAIR" id="AT1G67360">
    <property type="gene designation" value="LDAP1"/>
</dbReference>
<dbReference type="eggNOG" id="ENOG502QWHP">
    <property type="taxonomic scope" value="Eukaryota"/>
</dbReference>
<dbReference type="HOGENOM" id="CLU_069928_1_0_1"/>
<dbReference type="InParanoid" id="Q9FYF7"/>
<dbReference type="OMA" id="TEYKYFV"/>
<dbReference type="OrthoDB" id="1901372at2759"/>
<dbReference type="PhylomeDB" id="Q9FYF7"/>
<dbReference type="PRO" id="PR:Q9FYF7"/>
<dbReference type="Proteomes" id="UP000006548">
    <property type="component" value="Chromosome 1"/>
</dbReference>
<dbReference type="ExpressionAtlas" id="Q9FYF7">
    <property type="expression patterns" value="baseline and differential"/>
</dbReference>
<dbReference type="GO" id="GO:0005783">
    <property type="term" value="C:endoplasmic reticulum"/>
    <property type="evidence" value="ECO:0000314"/>
    <property type="project" value="TAIR"/>
</dbReference>
<dbReference type="GO" id="GO:0005811">
    <property type="term" value="C:lipid droplet"/>
    <property type="evidence" value="ECO:0000314"/>
    <property type="project" value="TAIR"/>
</dbReference>
<dbReference type="GO" id="GO:0000325">
    <property type="term" value="C:plant-type vacuole"/>
    <property type="evidence" value="ECO:0007005"/>
    <property type="project" value="TAIR"/>
</dbReference>
<dbReference type="GO" id="GO:0071456">
    <property type="term" value="P:cellular response to hypoxia"/>
    <property type="evidence" value="ECO:0007007"/>
    <property type="project" value="TAIR"/>
</dbReference>
<dbReference type="GO" id="GO:0080186">
    <property type="term" value="P:developmental vegetative growth"/>
    <property type="evidence" value="ECO:0000315"/>
    <property type="project" value="TAIR"/>
</dbReference>
<dbReference type="GO" id="GO:0034389">
    <property type="term" value="P:lipid droplet organization"/>
    <property type="evidence" value="ECO:0000315"/>
    <property type="project" value="TAIR"/>
</dbReference>
<dbReference type="GO" id="GO:0009555">
    <property type="term" value="P:pollen development"/>
    <property type="evidence" value="ECO:0000315"/>
    <property type="project" value="TAIR"/>
</dbReference>
<dbReference type="GO" id="GO:0045927">
    <property type="term" value="P:positive regulation of growth"/>
    <property type="evidence" value="ECO:0000315"/>
    <property type="project" value="TAIR"/>
</dbReference>
<dbReference type="GO" id="GO:1902584">
    <property type="term" value="P:positive regulation of response to water deprivation"/>
    <property type="evidence" value="ECO:0000315"/>
    <property type="project" value="TAIR"/>
</dbReference>
<dbReference type="InterPro" id="IPR008802">
    <property type="entry name" value="REF"/>
</dbReference>
<dbReference type="PANTHER" id="PTHR33732">
    <property type="entry name" value="REF/SRPP-LIKE PROTEIN OS05G0151300/LOC_OS05G05940"/>
    <property type="match status" value="1"/>
</dbReference>
<dbReference type="PANTHER" id="PTHR33732:SF2">
    <property type="entry name" value="REF_SRPP-LIKE PROTEIN"/>
    <property type="match status" value="1"/>
</dbReference>
<dbReference type="Pfam" id="PF05755">
    <property type="entry name" value="REF"/>
    <property type="match status" value="1"/>
</dbReference>
<feature type="chain" id="PRO_0000221064" description="REF/SRPP-like protein At1g67360">
    <location>
        <begin position="1"/>
        <end position="240"/>
    </location>
</feature>
<feature type="region of interest" description="Disordered" evidence="1">
    <location>
        <begin position="208"/>
        <end position="240"/>
    </location>
</feature>
<reference key="1">
    <citation type="journal article" date="2000" name="Nature">
        <title>Sequence and analysis of chromosome 1 of the plant Arabidopsis thaliana.</title>
        <authorList>
            <person name="Theologis A."/>
            <person name="Ecker J.R."/>
            <person name="Palm C.J."/>
            <person name="Federspiel N.A."/>
            <person name="Kaul S."/>
            <person name="White O."/>
            <person name="Alonso J."/>
            <person name="Altafi H."/>
            <person name="Araujo R."/>
            <person name="Bowman C.L."/>
            <person name="Brooks S.Y."/>
            <person name="Buehler E."/>
            <person name="Chan A."/>
            <person name="Chao Q."/>
            <person name="Chen H."/>
            <person name="Cheuk R.F."/>
            <person name="Chin C.W."/>
            <person name="Chung M.K."/>
            <person name="Conn L."/>
            <person name="Conway A.B."/>
            <person name="Conway A.R."/>
            <person name="Creasy T.H."/>
            <person name="Dewar K."/>
            <person name="Dunn P."/>
            <person name="Etgu P."/>
            <person name="Feldblyum T.V."/>
            <person name="Feng J.-D."/>
            <person name="Fong B."/>
            <person name="Fujii C.Y."/>
            <person name="Gill J.E."/>
            <person name="Goldsmith A.D."/>
            <person name="Haas B."/>
            <person name="Hansen N.F."/>
            <person name="Hughes B."/>
            <person name="Huizar L."/>
            <person name="Hunter J.L."/>
            <person name="Jenkins J."/>
            <person name="Johnson-Hopson C."/>
            <person name="Khan S."/>
            <person name="Khaykin E."/>
            <person name="Kim C.J."/>
            <person name="Koo H.L."/>
            <person name="Kremenetskaia I."/>
            <person name="Kurtz D.B."/>
            <person name="Kwan A."/>
            <person name="Lam B."/>
            <person name="Langin-Hooper S."/>
            <person name="Lee A."/>
            <person name="Lee J.M."/>
            <person name="Lenz C.A."/>
            <person name="Li J.H."/>
            <person name="Li Y.-P."/>
            <person name="Lin X."/>
            <person name="Liu S.X."/>
            <person name="Liu Z.A."/>
            <person name="Luros J.S."/>
            <person name="Maiti R."/>
            <person name="Marziali A."/>
            <person name="Militscher J."/>
            <person name="Miranda M."/>
            <person name="Nguyen M."/>
            <person name="Nierman W.C."/>
            <person name="Osborne B.I."/>
            <person name="Pai G."/>
            <person name="Peterson J."/>
            <person name="Pham P.K."/>
            <person name="Rizzo M."/>
            <person name="Rooney T."/>
            <person name="Rowley D."/>
            <person name="Sakano H."/>
            <person name="Salzberg S.L."/>
            <person name="Schwartz J.R."/>
            <person name="Shinn P."/>
            <person name="Southwick A.M."/>
            <person name="Sun H."/>
            <person name="Tallon L.J."/>
            <person name="Tambunga G."/>
            <person name="Toriumi M.J."/>
            <person name="Town C.D."/>
            <person name="Utterback T."/>
            <person name="Van Aken S."/>
            <person name="Vaysberg M."/>
            <person name="Vysotskaia V.S."/>
            <person name="Walker M."/>
            <person name="Wu D."/>
            <person name="Yu G."/>
            <person name="Fraser C.M."/>
            <person name="Venter J.C."/>
            <person name="Davis R.W."/>
        </authorList>
    </citation>
    <scope>NUCLEOTIDE SEQUENCE [LARGE SCALE GENOMIC DNA]</scope>
    <source>
        <strain>cv. Columbia</strain>
    </source>
</reference>
<reference key="2">
    <citation type="journal article" date="2017" name="Plant J.">
        <title>Araport11: a complete reannotation of the Arabidopsis thaliana reference genome.</title>
        <authorList>
            <person name="Cheng C.Y."/>
            <person name="Krishnakumar V."/>
            <person name="Chan A.P."/>
            <person name="Thibaud-Nissen F."/>
            <person name="Schobel S."/>
            <person name="Town C.D."/>
        </authorList>
    </citation>
    <scope>GENOME REANNOTATION</scope>
    <source>
        <strain>cv. Columbia</strain>
    </source>
</reference>
<reference key="3">
    <citation type="journal article" date="2003" name="Science">
        <title>Empirical analysis of transcriptional activity in the Arabidopsis genome.</title>
        <authorList>
            <person name="Yamada K."/>
            <person name="Lim J."/>
            <person name="Dale J.M."/>
            <person name="Chen H."/>
            <person name="Shinn P."/>
            <person name="Palm C.J."/>
            <person name="Southwick A.M."/>
            <person name="Wu H.C."/>
            <person name="Kim C.J."/>
            <person name="Nguyen M."/>
            <person name="Pham P.K."/>
            <person name="Cheuk R.F."/>
            <person name="Karlin-Newmann G."/>
            <person name="Liu S.X."/>
            <person name="Lam B."/>
            <person name="Sakano H."/>
            <person name="Wu T."/>
            <person name="Yu G."/>
            <person name="Miranda M."/>
            <person name="Quach H.L."/>
            <person name="Tripp M."/>
            <person name="Chang C.H."/>
            <person name="Lee J.M."/>
            <person name="Toriumi M.J."/>
            <person name="Chan M.M."/>
            <person name="Tang C.C."/>
            <person name="Onodera C.S."/>
            <person name="Deng J.M."/>
            <person name="Akiyama K."/>
            <person name="Ansari Y."/>
            <person name="Arakawa T."/>
            <person name="Banh J."/>
            <person name="Banno F."/>
            <person name="Bowser L."/>
            <person name="Brooks S.Y."/>
            <person name="Carninci P."/>
            <person name="Chao Q."/>
            <person name="Choy N."/>
            <person name="Enju A."/>
            <person name="Goldsmith A.D."/>
            <person name="Gurjal M."/>
            <person name="Hansen N.F."/>
            <person name="Hayashizaki Y."/>
            <person name="Johnson-Hopson C."/>
            <person name="Hsuan V.W."/>
            <person name="Iida K."/>
            <person name="Karnes M."/>
            <person name="Khan S."/>
            <person name="Koesema E."/>
            <person name="Ishida J."/>
            <person name="Jiang P.X."/>
            <person name="Jones T."/>
            <person name="Kawai J."/>
            <person name="Kamiya A."/>
            <person name="Meyers C."/>
            <person name="Nakajima M."/>
            <person name="Narusaka M."/>
            <person name="Seki M."/>
            <person name="Sakurai T."/>
            <person name="Satou M."/>
            <person name="Tamse R."/>
            <person name="Vaysberg M."/>
            <person name="Wallender E.K."/>
            <person name="Wong C."/>
            <person name="Yamamura Y."/>
            <person name="Yuan S."/>
            <person name="Shinozaki K."/>
            <person name="Davis R.W."/>
            <person name="Theologis A."/>
            <person name="Ecker J.R."/>
        </authorList>
    </citation>
    <scope>NUCLEOTIDE SEQUENCE [LARGE SCALE MRNA]</scope>
    <source>
        <strain>cv. Columbia</strain>
    </source>
</reference>
<reference key="4">
    <citation type="submission" date="2002-03" db="EMBL/GenBank/DDBJ databases">
        <title>Full-length cDNA from Arabidopsis thaliana.</title>
        <authorList>
            <person name="Brover V.V."/>
            <person name="Troukhan M.E."/>
            <person name="Alexandrov N.A."/>
            <person name="Lu Y.-P."/>
            <person name="Flavell R.B."/>
            <person name="Feldmann K.A."/>
        </authorList>
    </citation>
    <scope>NUCLEOTIDE SEQUENCE [LARGE SCALE MRNA]</scope>
</reference>
<comment type="similarity">
    <text evidence="2">Belongs to the REF/SRPP family.</text>
</comment>
<accession>Q9FYF7</accession>
<sequence length="240" mass="26425">METEKKNSKEVALKHLAFVRIATIHILASVSNLYEYAKQNSGPLKSAVEKVEGAVTTVVTPVYQKFKDVPDSLLVFLDHKVGEVSYKFDEHAPPMAKKVVNQAHVLIYKATEKAQSFVKEARTGGPKAAFNYAATEYKFFVVTNSVKVWAKLNQYKPIHAMGDKALPVAAHFSSRYNDLVTDMTNMGYSLVGYLPLVPVDDIVKAYEKEDARRKKGGDTAGKKGETTDAADGDKSSSDSE</sequence>
<gene>
    <name type="ordered locus">At1g67360</name>
    <name type="ORF">F1N21.18</name>
</gene>
<protein>
    <recommendedName>
        <fullName>REF/SRPP-like protein At1g67360</fullName>
    </recommendedName>
</protein>
<name>Y1736_ARATH</name>
<proteinExistence type="evidence at transcript level"/>
<keyword id="KW-1185">Reference proteome</keyword>
<evidence type="ECO:0000256" key="1">
    <source>
        <dbReference type="SAM" id="MobiDB-lite"/>
    </source>
</evidence>
<evidence type="ECO:0000305" key="2"/>